<name>RS182_MYCVP</name>
<accession>A1THY5</accession>
<reference key="1">
    <citation type="submission" date="2006-12" db="EMBL/GenBank/DDBJ databases">
        <title>Complete sequence of Mycobacterium vanbaalenii PYR-1.</title>
        <authorList>
            <consortium name="US DOE Joint Genome Institute"/>
            <person name="Copeland A."/>
            <person name="Lucas S."/>
            <person name="Lapidus A."/>
            <person name="Barry K."/>
            <person name="Detter J.C."/>
            <person name="Glavina del Rio T."/>
            <person name="Hammon N."/>
            <person name="Israni S."/>
            <person name="Dalin E."/>
            <person name="Tice H."/>
            <person name="Pitluck S."/>
            <person name="Singan V."/>
            <person name="Schmutz J."/>
            <person name="Larimer F."/>
            <person name="Land M."/>
            <person name="Hauser L."/>
            <person name="Kyrpides N."/>
            <person name="Anderson I.J."/>
            <person name="Miller C."/>
            <person name="Richardson P."/>
        </authorList>
    </citation>
    <scope>NUCLEOTIDE SEQUENCE [LARGE SCALE GENOMIC DNA]</scope>
    <source>
        <strain>DSM 7251 / JCM 13017 / BCRC 16820 / KCTC 9966 / NRRL B-24157 / PYR-1</strain>
    </source>
</reference>
<dbReference type="EMBL" id="CP000511">
    <property type="protein sequence ID" value="ABM16785.1"/>
    <property type="molecule type" value="Genomic_DNA"/>
</dbReference>
<dbReference type="SMR" id="A1THY5"/>
<dbReference type="STRING" id="350058.Mvan_6032"/>
<dbReference type="KEGG" id="mva:Mvan_6032"/>
<dbReference type="eggNOG" id="COG0238">
    <property type="taxonomic scope" value="Bacteria"/>
</dbReference>
<dbReference type="HOGENOM" id="CLU_148710_2_2_11"/>
<dbReference type="Proteomes" id="UP000009159">
    <property type="component" value="Chromosome"/>
</dbReference>
<dbReference type="GO" id="GO:0022627">
    <property type="term" value="C:cytosolic small ribosomal subunit"/>
    <property type="evidence" value="ECO:0007669"/>
    <property type="project" value="TreeGrafter"/>
</dbReference>
<dbReference type="GO" id="GO:0070181">
    <property type="term" value="F:small ribosomal subunit rRNA binding"/>
    <property type="evidence" value="ECO:0007669"/>
    <property type="project" value="TreeGrafter"/>
</dbReference>
<dbReference type="GO" id="GO:0003735">
    <property type="term" value="F:structural constituent of ribosome"/>
    <property type="evidence" value="ECO:0007669"/>
    <property type="project" value="InterPro"/>
</dbReference>
<dbReference type="GO" id="GO:0006412">
    <property type="term" value="P:translation"/>
    <property type="evidence" value="ECO:0007669"/>
    <property type="project" value="UniProtKB-UniRule"/>
</dbReference>
<dbReference type="FunFam" id="4.10.640.10:FF:000004">
    <property type="entry name" value="30S ribosomal protein S18"/>
    <property type="match status" value="1"/>
</dbReference>
<dbReference type="Gene3D" id="4.10.640.10">
    <property type="entry name" value="Ribosomal protein S18"/>
    <property type="match status" value="1"/>
</dbReference>
<dbReference type="HAMAP" id="MF_00270">
    <property type="entry name" value="Ribosomal_bS18"/>
    <property type="match status" value="1"/>
</dbReference>
<dbReference type="InterPro" id="IPR001648">
    <property type="entry name" value="Ribosomal_bS18"/>
</dbReference>
<dbReference type="InterPro" id="IPR018275">
    <property type="entry name" value="Ribosomal_bS18_CS"/>
</dbReference>
<dbReference type="InterPro" id="IPR036870">
    <property type="entry name" value="Ribosomal_bS18_sf"/>
</dbReference>
<dbReference type="NCBIfam" id="TIGR00165">
    <property type="entry name" value="S18"/>
    <property type="match status" value="1"/>
</dbReference>
<dbReference type="PANTHER" id="PTHR13479">
    <property type="entry name" value="30S RIBOSOMAL PROTEIN S18"/>
    <property type="match status" value="1"/>
</dbReference>
<dbReference type="PANTHER" id="PTHR13479:SF62">
    <property type="entry name" value="SMALL RIBOSOMAL SUBUNIT PROTEIN BS18A"/>
    <property type="match status" value="1"/>
</dbReference>
<dbReference type="Pfam" id="PF01084">
    <property type="entry name" value="Ribosomal_S18"/>
    <property type="match status" value="1"/>
</dbReference>
<dbReference type="PRINTS" id="PR00974">
    <property type="entry name" value="RIBOSOMALS18"/>
</dbReference>
<dbReference type="SUPFAM" id="SSF46911">
    <property type="entry name" value="Ribosomal protein S18"/>
    <property type="match status" value="1"/>
</dbReference>
<dbReference type="PROSITE" id="PS00057">
    <property type="entry name" value="RIBOSOMAL_S18"/>
    <property type="match status" value="1"/>
</dbReference>
<evidence type="ECO:0000255" key="1">
    <source>
        <dbReference type="HAMAP-Rule" id="MF_00270"/>
    </source>
</evidence>
<evidence type="ECO:0000305" key="2"/>
<comment type="function">
    <text evidence="1">Binds as a heterodimer with protein bS6 to the central domain of the 16S rRNA, where it helps stabilize the platform of the 30S subunit.</text>
</comment>
<comment type="subunit">
    <text evidence="1">Part of the 30S ribosomal subunit. Forms a tight heterodimer with protein bS6.</text>
</comment>
<comment type="similarity">
    <text evidence="1">Belongs to the bacterial ribosomal protein bS18 family.</text>
</comment>
<sequence length="87" mass="9934">MAKSSTKRRPAPEKPVKTRKCVFCSKKGKNQDIDYKDTQLLRTYISERGKIRARRVTGNCVQHQRDIAIAVKNAREVALLPFSSSTR</sequence>
<gene>
    <name evidence="1" type="primary">rpsR2</name>
    <name type="ordered locus">Mvan_6032</name>
</gene>
<keyword id="KW-0687">Ribonucleoprotein</keyword>
<keyword id="KW-0689">Ribosomal protein</keyword>
<keyword id="KW-0694">RNA-binding</keyword>
<keyword id="KW-0699">rRNA-binding</keyword>
<feature type="chain" id="PRO_0000345511" description="Small ribosomal subunit protein bS18B">
    <location>
        <begin position="1"/>
        <end position="87"/>
    </location>
</feature>
<protein>
    <recommendedName>
        <fullName evidence="1">Small ribosomal subunit protein bS18B</fullName>
    </recommendedName>
    <alternativeName>
        <fullName evidence="2">30S ribosomal protein S18 2</fullName>
    </alternativeName>
</protein>
<organism>
    <name type="scientific">Mycolicibacterium vanbaalenii (strain DSM 7251 / JCM 13017 / BCRC 16820 / KCTC 9966 / NRRL B-24157 / PYR-1)</name>
    <name type="common">Mycobacterium vanbaalenii</name>
    <dbReference type="NCBI Taxonomy" id="350058"/>
    <lineage>
        <taxon>Bacteria</taxon>
        <taxon>Bacillati</taxon>
        <taxon>Actinomycetota</taxon>
        <taxon>Actinomycetes</taxon>
        <taxon>Mycobacteriales</taxon>
        <taxon>Mycobacteriaceae</taxon>
        <taxon>Mycolicibacterium</taxon>
    </lineage>
</organism>
<proteinExistence type="inferred from homology"/>